<protein>
    <recommendedName>
        <fullName>UPF0669 protein C6orf120 homolog</fullName>
    </recommendedName>
</protein>
<keyword id="KW-0053">Apoptosis</keyword>
<keyword id="KW-0325">Glycoprotein</keyword>
<keyword id="KW-1185">Reference proteome</keyword>
<keyword id="KW-0964">Secreted</keyword>
<keyword id="KW-0732">Signal</keyword>
<accession>Q6AY64</accession>
<sequence>MATPWRCALLMILASQVVILVKCLEDDDVPEEWLLLHVVQGQIGAGNYSYLRLNHEGKIILRMQSLRGDADLYVSDSTPHPSFDEYELQSVTCGQDVVSIPAHFQRPVGIGIYGHPSHHESDFEMRVYYDRTVDQYPFGEAAYAADQTGTSQKQAYTPEEAAQEEESVLWTILISILKLVLEILF</sequence>
<proteinExistence type="evidence at transcript level"/>
<evidence type="ECO:0000250" key="1"/>
<evidence type="ECO:0000255" key="2"/>
<evidence type="ECO:0000305" key="3"/>
<feature type="signal peptide" evidence="2">
    <location>
        <begin position="1"/>
        <end position="23"/>
    </location>
</feature>
<feature type="chain" id="PRO_0000297665" description="UPF0669 protein C6orf120 homolog">
    <location>
        <begin position="24"/>
        <end position="185"/>
    </location>
</feature>
<feature type="glycosylation site" description="N-linked (GlcNAc...) asparagine" evidence="2">
    <location>
        <position position="47"/>
    </location>
</feature>
<organism>
    <name type="scientific">Rattus norvegicus</name>
    <name type="common">Rat</name>
    <dbReference type="NCBI Taxonomy" id="10116"/>
    <lineage>
        <taxon>Eukaryota</taxon>
        <taxon>Metazoa</taxon>
        <taxon>Chordata</taxon>
        <taxon>Craniata</taxon>
        <taxon>Vertebrata</taxon>
        <taxon>Euteleostomi</taxon>
        <taxon>Mammalia</taxon>
        <taxon>Eutheria</taxon>
        <taxon>Euarchontoglires</taxon>
        <taxon>Glires</taxon>
        <taxon>Rodentia</taxon>
        <taxon>Myomorpha</taxon>
        <taxon>Muroidea</taxon>
        <taxon>Muridae</taxon>
        <taxon>Murinae</taxon>
        <taxon>Rattus</taxon>
    </lineage>
</organism>
<comment type="function">
    <text evidence="1">May be involved in induction of apoptosis in CD4(+) T-cells, but not CD8(+) T-cells or hepatocytes.</text>
</comment>
<comment type="subcellular location">
    <subcellularLocation>
        <location evidence="1">Secreted</location>
    </subcellularLocation>
    <text evidence="1">Secreted by hepatocytes.</text>
</comment>
<comment type="similarity">
    <text evidence="3">Belongs to the UPF0669 family.</text>
</comment>
<reference key="1">
    <citation type="journal article" date="2004" name="Genome Res.">
        <title>The status, quality, and expansion of the NIH full-length cDNA project: the Mammalian Gene Collection (MGC).</title>
        <authorList>
            <consortium name="The MGC Project Team"/>
        </authorList>
    </citation>
    <scope>NUCLEOTIDE SEQUENCE [LARGE SCALE MRNA]</scope>
    <source>
        <tissue>Kidney</tissue>
    </source>
</reference>
<dbReference type="EMBL" id="BC079175">
    <property type="protein sequence ID" value="AAH79175.1"/>
    <property type="molecule type" value="mRNA"/>
</dbReference>
<dbReference type="RefSeq" id="NP_001096826.1">
    <property type="nucleotide sequence ID" value="NM_001103356.2"/>
</dbReference>
<dbReference type="RefSeq" id="NP_001406459.1">
    <property type="nucleotide sequence ID" value="NM_001419530.1"/>
</dbReference>
<dbReference type="RefSeq" id="XP_006228031.1">
    <property type="nucleotide sequence ID" value="XM_006227969.3"/>
</dbReference>
<dbReference type="RefSeq" id="XP_006228032.1">
    <property type="nucleotide sequence ID" value="XM_006227970.4"/>
</dbReference>
<dbReference type="FunCoup" id="Q6AY64">
    <property type="interactions" value="1762"/>
</dbReference>
<dbReference type="STRING" id="10116.ENSRNOP00000020889"/>
<dbReference type="GlyGen" id="Q6AY64">
    <property type="glycosylation" value="1 site"/>
</dbReference>
<dbReference type="PhosphoSitePlus" id="Q6AY64"/>
<dbReference type="PaxDb" id="10116-ENSRNOP00000020889"/>
<dbReference type="Ensembl" id="ENSRNOT00000095112.1">
    <property type="protein sequence ID" value="ENSRNOP00000080983.1"/>
    <property type="gene ID" value="ENSRNOG00000070184.1"/>
</dbReference>
<dbReference type="Ensembl" id="ENSRNOT00000108772.1">
    <property type="protein sequence ID" value="ENSRNOP00000093357.1"/>
    <property type="gene ID" value="ENSRNOG00000070184.1"/>
</dbReference>
<dbReference type="GeneID" id="100125364"/>
<dbReference type="KEGG" id="rno:100125364"/>
<dbReference type="UCSC" id="RGD:1642424">
    <property type="organism name" value="rat"/>
</dbReference>
<dbReference type="AGR" id="RGD:1642424"/>
<dbReference type="CTD" id="100125364"/>
<dbReference type="RGD" id="1642424">
    <property type="gene designation" value="C1h6orf120"/>
</dbReference>
<dbReference type="VEuPathDB" id="HostDB:ENSRNOG00000015609"/>
<dbReference type="eggNOG" id="ENOG502RXJP">
    <property type="taxonomic scope" value="Eukaryota"/>
</dbReference>
<dbReference type="GeneTree" id="ENSGT00390000018879"/>
<dbReference type="HOGENOM" id="CLU_113576_1_0_1"/>
<dbReference type="InParanoid" id="Q6AY64"/>
<dbReference type="OMA" id="FGETAYS"/>
<dbReference type="OrthoDB" id="10046613at2759"/>
<dbReference type="PhylomeDB" id="Q6AY64"/>
<dbReference type="TreeFam" id="TF331743"/>
<dbReference type="Reactome" id="R-RNO-6798695">
    <property type="pathway name" value="Neutrophil degranulation"/>
</dbReference>
<dbReference type="PRO" id="PR:Q6AY64"/>
<dbReference type="Proteomes" id="UP000002494">
    <property type="component" value="Chromosome 1"/>
</dbReference>
<dbReference type="Bgee" id="ENSRNOG00000015597">
    <property type="expression patterns" value="Expressed in pancreas and 20 other cell types or tissues"/>
</dbReference>
<dbReference type="GO" id="GO:0005576">
    <property type="term" value="C:extracellular region"/>
    <property type="evidence" value="ECO:0007669"/>
    <property type="project" value="UniProtKB-SubCell"/>
</dbReference>
<dbReference type="GO" id="GO:0006915">
    <property type="term" value="P:apoptotic process"/>
    <property type="evidence" value="ECO:0007669"/>
    <property type="project" value="UniProtKB-KW"/>
</dbReference>
<dbReference type="InterPro" id="IPR031420">
    <property type="entry name" value="UPF0669"/>
</dbReference>
<dbReference type="PANTHER" id="PTHR31703">
    <property type="entry name" value="UPF0669 PROTEIN C6ORF120"/>
    <property type="match status" value="1"/>
</dbReference>
<dbReference type="PANTHER" id="PTHR31703:SF2">
    <property type="entry name" value="UPF0669 PROTEIN C6ORF120"/>
    <property type="match status" value="1"/>
</dbReference>
<dbReference type="Pfam" id="PF17065">
    <property type="entry name" value="UPF0669"/>
    <property type="match status" value="1"/>
</dbReference>
<name>CF120_RAT</name>